<protein>
    <recommendedName>
        <fullName>Uncharacterized protein ORF46</fullName>
    </recommendedName>
</protein>
<accession>Q6R7H8</accession>
<gene>
    <name type="ORF">ORF46</name>
</gene>
<reference key="1">
    <citation type="journal article" date="2005" name="J. Gen. Virol.">
        <title>A novel class of herpesvirus with bivalve hosts.</title>
        <authorList>
            <person name="Davison A.J."/>
            <person name="Trus B.L."/>
            <person name="Cheng N."/>
            <person name="Steven A.C."/>
            <person name="Watson M.S."/>
            <person name="Cunningham C."/>
            <person name="Le Deuff R.M."/>
            <person name="Renault T."/>
        </authorList>
    </citation>
    <scope>NUCLEOTIDE SEQUENCE [LARGE SCALE GENOMIC DNA]</scope>
</reference>
<sequence>METDFSEITNKRFKRGVLSLMPSRRRCPYFRSRASPANRTLLTQPRAFTLDFQSAIPNNIRREYINKLRDQFDTVYESSQVKDYTTKEAEVLKNENYTVKALSRKKVYEKQLIVGSSEFYSQRYKRLIELRASFKRNQDDDGIQITTDNHDLAGAYICTSSPVTNSTKPVIGVVNKCETDILQGKQLYKISLANWYSSLDDNIADLKTRIQSVFG</sequence>
<dbReference type="EMBL" id="AY509253">
    <property type="protein sequence ID" value="AAS00937.1"/>
    <property type="molecule type" value="Genomic_DNA"/>
</dbReference>
<dbReference type="RefSeq" id="YP_024590.1">
    <property type="nucleotide sequence ID" value="NC_005881.2"/>
</dbReference>
<dbReference type="SMR" id="Q6R7H8"/>
<dbReference type="KEGG" id="vg:2948184"/>
<dbReference type="Proteomes" id="UP000007021">
    <property type="component" value="Segment"/>
</dbReference>
<proteinExistence type="predicted"/>
<feature type="chain" id="PRO_0000385074" description="Uncharacterized protein ORF46">
    <location>
        <begin position="1"/>
        <end position="215"/>
    </location>
</feature>
<organism>
    <name type="scientific">Ostreid herpesvirus 1 (isolate France)</name>
    <name type="common">OsHV-1</name>
    <name type="synonym">Pacific oyster herpesvirus</name>
    <dbReference type="NCBI Taxonomy" id="654903"/>
    <lineage>
        <taxon>Viruses</taxon>
        <taxon>Duplodnaviria</taxon>
        <taxon>Heunggongvirae</taxon>
        <taxon>Peploviricota</taxon>
        <taxon>Herviviricetes</taxon>
        <taxon>Herpesvirales</taxon>
        <taxon>Malacoherpesviridae</taxon>
        <taxon>Ostreavirus</taxon>
        <taxon>Ostreavirus ostreidmalaco1</taxon>
        <taxon>Ostreid herpesvirus 1</taxon>
    </lineage>
</organism>
<keyword id="KW-1185">Reference proteome</keyword>
<organismHost>
    <name type="scientific">Magallana gigas</name>
    <name type="common">Pacific oyster</name>
    <name type="synonym">Crassostrea gigas</name>
    <dbReference type="NCBI Taxonomy" id="29159"/>
</organismHost>
<organismHost>
    <name type="scientific">Pecten maximus</name>
    <name type="common">King scallop</name>
    <name type="synonym">Pilgrim's clam</name>
    <dbReference type="NCBI Taxonomy" id="6579"/>
</organismHost>
<name>Y046_OSHVF</name>